<reference key="1">
    <citation type="journal article" date="2004" name="Plant J.">
        <title>DVL, a novel class of small polypeptides: overexpression alters Arabidopsis development.</title>
        <authorList>
            <person name="Wen J."/>
            <person name="Lease K.A."/>
            <person name="Walker J.C."/>
        </authorList>
    </citation>
    <scope>NUCLEOTIDE SEQUENCE [GENOMIC DNA]</scope>
    <scope>GENE FAMILY</scope>
    <scope>NOMENCLATURE</scope>
    <source>
        <strain>cv. Columbia</strain>
    </source>
</reference>
<reference key="2">
    <citation type="journal article" date="2000" name="Nature">
        <title>Sequence and analysis of chromosome 3 of the plant Arabidopsis thaliana.</title>
        <authorList>
            <person name="Salanoubat M."/>
            <person name="Lemcke K."/>
            <person name="Rieger M."/>
            <person name="Ansorge W."/>
            <person name="Unseld M."/>
            <person name="Fartmann B."/>
            <person name="Valle G."/>
            <person name="Bloecker H."/>
            <person name="Perez-Alonso M."/>
            <person name="Obermaier B."/>
            <person name="Delseny M."/>
            <person name="Boutry M."/>
            <person name="Grivell L.A."/>
            <person name="Mache R."/>
            <person name="Puigdomenech P."/>
            <person name="De Simone V."/>
            <person name="Choisne N."/>
            <person name="Artiguenave F."/>
            <person name="Robert C."/>
            <person name="Brottier P."/>
            <person name="Wincker P."/>
            <person name="Cattolico L."/>
            <person name="Weissenbach J."/>
            <person name="Saurin W."/>
            <person name="Quetier F."/>
            <person name="Schaefer M."/>
            <person name="Mueller-Auer S."/>
            <person name="Gabel C."/>
            <person name="Fuchs M."/>
            <person name="Benes V."/>
            <person name="Wurmbach E."/>
            <person name="Drzonek H."/>
            <person name="Erfle H."/>
            <person name="Jordan N."/>
            <person name="Bangert S."/>
            <person name="Wiedelmann R."/>
            <person name="Kranz H."/>
            <person name="Voss H."/>
            <person name="Holland R."/>
            <person name="Brandt P."/>
            <person name="Nyakatura G."/>
            <person name="Vezzi A."/>
            <person name="D'Angelo M."/>
            <person name="Pallavicini A."/>
            <person name="Toppo S."/>
            <person name="Simionati B."/>
            <person name="Conrad A."/>
            <person name="Hornischer K."/>
            <person name="Kauer G."/>
            <person name="Loehnert T.-H."/>
            <person name="Nordsiek G."/>
            <person name="Reichelt J."/>
            <person name="Scharfe M."/>
            <person name="Schoen O."/>
            <person name="Bargues M."/>
            <person name="Terol J."/>
            <person name="Climent J."/>
            <person name="Navarro P."/>
            <person name="Collado C."/>
            <person name="Perez-Perez A."/>
            <person name="Ottenwaelder B."/>
            <person name="Duchemin D."/>
            <person name="Cooke R."/>
            <person name="Laudie M."/>
            <person name="Berger-Llauro C."/>
            <person name="Purnelle B."/>
            <person name="Masuy D."/>
            <person name="de Haan M."/>
            <person name="Maarse A.C."/>
            <person name="Alcaraz J.-P."/>
            <person name="Cottet A."/>
            <person name="Casacuberta E."/>
            <person name="Monfort A."/>
            <person name="Argiriou A."/>
            <person name="Flores M."/>
            <person name="Liguori R."/>
            <person name="Vitale D."/>
            <person name="Mannhaupt G."/>
            <person name="Haase D."/>
            <person name="Schoof H."/>
            <person name="Rudd S."/>
            <person name="Zaccaria P."/>
            <person name="Mewes H.-W."/>
            <person name="Mayer K.F.X."/>
            <person name="Kaul S."/>
            <person name="Town C.D."/>
            <person name="Koo H.L."/>
            <person name="Tallon L.J."/>
            <person name="Jenkins J."/>
            <person name="Rooney T."/>
            <person name="Rizzo M."/>
            <person name="Walts A."/>
            <person name="Utterback T."/>
            <person name="Fujii C.Y."/>
            <person name="Shea T.P."/>
            <person name="Creasy T.H."/>
            <person name="Haas B."/>
            <person name="Maiti R."/>
            <person name="Wu D."/>
            <person name="Peterson J."/>
            <person name="Van Aken S."/>
            <person name="Pai G."/>
            <person name="Militscher J."/>
            <person name="Sellers P."/>
            <person name="Gill J.E."/>
            <person name="Feldblyum T.V."/>
            <person name="Preuss D."/>
            <person name="Lin X."/>
            <person name="Nierman W.C."/>
            <person name="Salzberg S.L."/>
            <person name="White O."/>
            <person name="Venter J.C."/>
            <person name="Fraser C.M."/>
            <person name="Kaneko T."/>
            <person name="Nakamura Y."/>
            <person name="Sato S."/>
            <person name="Kato T."/>
            <person name="Asamizu E."/>
            <person name="Sasamoto S."/>
            <person name="Kimura T."/>
            <person name="Idesawa K."/>
            <person name="Kawashima K."/>
            <person name="Kishida Y."/>
            <person name="Kiyokawa C."/>
            <person name="Kohara M."/>
            <person name="Matsumoto M."/>
            <person name="Matsuno A."/>
            <person name="Muraki A."/>
            <person name="Nakayama S."/>
            <person name="Nakazaki N."/>
            <person name="Shinpo S."/>
            <person name="Takeuchi C."/>
            <person name="Wada T."/>
            <person name="Watanabe A."/>
            <person name="Yamada M."/>
            <person name="Yasuda M."/>
            <person name="Tabata S."/>
        </authorList>
    </citation>
    <scope>NUCLEOTIDE SEQUENCE [LARGE SCALE GENOMIC DNA]</scope>
    <source>
        <strain>cv. Columbia</strain>
    </source>
</reference>
<reference key="3">
    <citation type="journal article" date="2017" name="Plant J.">
        <title>Araport11: a complete reannotation of the Arabidopsis thaliana reference genome.</title>
        <authorList>
            <person name="Cheng C.Y."/>
            <person name="Krishnakumar V."/>
            <person name="Chan A.P."/>
            <person name="Thibaud-Nissen F."/>
            <person name="Schobel S."/>
            <person name="Town C.D."/>
        </authorList>
    </citation>
    <scope>GENOME REANNOTATION</scope>
    <source>
        <strain>cv. Columbia</strain>
    </source>
</reference>
<reference key="4">
    <citation type="journal article" date="2004" name="Plant J.">
        <title>Overexpression of a novel small peptide ROTUNDIFOLIA4 decreases cell proliferation and alters leaf shape in Arabidopsis thaliana.</title>
        <authorList>
            <person name="Narita N.N."/>
            <person name="Moore S."/>
            <person name="Horiguchi G."/>
            <person name="Kubo M."/>
            <person name="Demura T."/>
            <person name="Fukuda H."/>
            <person name="Goodrich J."/>
            <person name="Tsukaya H."/>
        </authorList>
    </citation>
    <scope>GENE FAMILY</scope>
    <source>
        <strain>cv. Columbia</strain>
        <strain>cv. Landsberg erecta</strain>
    </source>
</reference>
<reference key="5">
    <citation type="journal article" date="2015" name="J. Plant Res.">
        <title>Comparative analysis of the RTFL peptide family on the control of plant organogenesis.</title>
        <authorList>
            <person name="Guo P."/>
            <person name="Yoshimura A."/>
            <person name="Ishikawa N."/>
            <person name="Yamaguchi T."/>
            <person name="Guo Y."/>
            <person name="Tsukaya H."/>
        </authorList>
    </citation>
    <scope>REVIEW</scope>
    <scope>GENE FAMILY</scope>
    <scope>NOMENCLATURE</scope>
    <source>
        <strain>cv. Columbia</strain>
    </source>
</reference>
<protein>
    <recommendedName>
        <fullName evidence="4">Small polypeptide DEVIL 14</fullName>
    </recommendedName>
    <alternativeName>
        <fullName evidence="5">Small polypeptide ROTUNDIFOLIA LIKE 14</fullName>
        <shortName evidence="5">Small polypeptide ROT-FOUR-LIKE 14</shortName>
    </alternativeName>
</protein>
<proteinExistence type="inferred from homology"/>
<sequence length="48" mass="5615">MAGTVVLRCCTSVTKVRTWKRCSKQIKEQRARLYIIWKCAVFLLSSHD</sequence>
<gene>
    <name evidence="4" type="primary">DVL14</name>
    <name evidence="5" type="synonym">RTFL14</name>
    <name evidence="7" type="ordered locus">At3g63088</name>
    <name evidence="8" type="ORF">T20O10</name>
</gene>
<organism>
    <name type="scientific">Arabidopsis thaliana</name>
    <name type="common">Mouse-ear cress</name>
    <dbReference type="NCBI Taxonomy" id="3702"/>
    <lineage>
        <taxon>Eukaryota</taxon>
        <taxon>Viridiplantae</taxon>
        <taxon>Streptophyta</taxon>
        <taxon>Embryophyta</taxon>
        <taxon>Tracheophyta</taxon>
        <taxon>Spermatophyta</taxon>
        <taxon>Magnoliopsida</taxon>
        <taxon>eudicotyledons</taxon>
        <taxon>Gunneridae</taxon>
        <taxon>Pentapetalae</taxon>
        <taxon>rosids</taxon>
        <taxon>malvids</taxon>
        <taxon>Brassicales</taxon>
        <taxon>Brassicaceae</taxon>
        <taxon>Camelineae</taxon>
        <taxon>Arabidopsis</taxon>
    </lineage>
</organism>
<evidence type="ECO:0000250" key="1">
    <source>
        <dbReference type="UniProtKB" id="Q6X5V0"/>
    </source>
</evidence>
<evidence type="ECO:0000250" key="2">
    <source>
        <dbReference type="UniProtKB" id="Q7XXN8"/>
    </source>
</evidence>
<evidence type="ECO:0000255" key="3"/>
<evidence type="ECO:0000303" key="4">
    <source>
    </source>
</evidence>
<evidence type="ECO:0000303" key="5">
    <source>
    </source>
</evidence>
<evidence type="ECO:0000305" key="6"/>
<evidence type="ECO:0000312" key="7">
    <source>
        <dbReference type="Araport" id="AT3G63088"/>
    </source>
</evidence>
<evidence type="ECO:0000312" key="8">
    <source>
        <dbReference type="EMBL" id="AL163816"/>
    </source>
</evidence>
<name>DVL14_ARATH</name>
<comment type="function">
    <text evidence="1">Small polypeptide acting as a regulatory molecule which coordinates cellular responses required for differentiation, growth and development, probably by restricting polar cell proliferation in lateral organs and coordinating socket cell recruitment and differentiation at trichome sites.</text>
</comment>
<comment type="subcellular location">
    <subcellularLocation>
        <location evidence="2">Cell membrane</location>
        <topology evidence="3">Single-pass membrane protein</topology>
    </subcellularLocation>
</comment>
<comment type="similarity">
    <text evidence="6">Belongs to the DVL/RTFL small polypeptides family.</text>
</comment>
<accession>Q6IM87</accession>
<dbReference type="EMBL" id="BK001757">
    <property type="protein sequence ID" value="DAA02285.1"/>
    <property type="molecule type" value="Genomic_DNA"/>
</dbReference>
<dbReference type="EMBL" id="AL163816">
    <property type="status" value="NOT_ANNOTATED_CDS"/>
    <property type="molecule type" value="Genomic_DNA"/>
</dbReference>
<dbReference type="EMBL" id="CP002686">
    <property type="protein sequence ID" value="AEE80433.1"/>
    <property type="molecule type" value="Genomic_DNA"/>
</dbReference>
<dbReference type="RefSeq" id="NP_001319824.1">
    <property type="nucleotide sequence ID" value="NM_001340189.1"/>
</dbReference>
<dbReference type="SMR" id="Q6IM87"/>
<dbReference type="STRING" id="3702.Q6IM87"/>
<dbReference type="PaxDb" id="3702-AT3G63088.1"/>
<dbReference type="EnsemblPlants" id="AT3G63088.1">
    <property type="protein sequence ID" value="AT3G63088.1"/>
    <property type="gene ID" value="AT3G63088"/>
</dbReference>
<dbReference type="GeneID" id="28719424"/>
<dbReference type="Gramene" id="AT3G63088.1">
    <property type="protein sequence ID" value="AT3G63088.1"/>
    <property type="gene ID" value="AT3G63088"/>
</dbReference>
<dbReference type="KEGG" id="ath:AT3G63088"/>
<dbReference type="Araport" id="AT3G63088"/>
<dbReference type="TAIR" id="AT3G63088">
    <property type="gene designation" value="RTFL14"/>
</dbReference>
<dbReference type="HOGENOM" id="CLU_203450_0_0_1"/>
<dbReference type="InParanoid" id="Q6IM87"/>
<dbReference type="PhylomeDB" id="Q6IM87"/>
<dbReference type="PRO" id="PR:Q6IM87"/>
<dbReference type="Proteomes" id="UP000006548">
    <property type="component" value="Chromosome 3"/>
</dbReference>
<dbReference type="ExpressionAtlas" id="Q6IM87">
    <property type="expression patterns" value="baseline and differential"/>
</dbReference>
<dbReference type="GO" id="GO:0005886">
    <property type="term" value="C:plasma membrane"/>
    <property type="evidence" value="ECO:0000250"/>
    <property type="project" value="UniProtKB"/>
</dbReference>
<dbReference type="GO" id="GO:0008285">
    <property type="term" value="P:negative regulation of cell population proliferation"/>
    <property type="evidence" value="ECO:0000250"/>
    <property type="project" value="UniProtKB"/>
</dbReference>
<dbReference type="GO" id="GO:0048367">
    <property type="term" value="P:shoot system development"/>
    <property type="evidence" value="ECO:0000250"/>
    <property type="project" value="TAIR"/>
</dbReference>
<dbReference type="InterPro" id="IPR012552">
    <property type="entry name" value="DVL"/>
</dbReference>
<dbReference type="InterPro" id="IPR052153">
    <property type="entry name" value="DVL/RTFL_small_peptides"/>
</dbReference>
<dbReference type="PANTHER" id="PTHR47855:SF4">
    <property type="entry name" value="DVL FAMILY PROTEIN"/>
    <property type="match status" value="1"/>
</dbReference>
<dbReference type="PANTHER" id="PTHR47855">
    <property type="entry name" value="OS01G0525701 PROTEIN"/>
    <property type="match status" value="1"/>
</dbReference>
<dbReference type="Pfam" id="PF08137">
    <property type="entry name" value="DVL"/>
    <property type="match status" value="1"/>
</dbReference>
<feature type="chain" id="PRO_0000452782" description="Small polypeptide DEVIL 14">
    <location>
        <begin position="1"/>
        <end position="48"/>
    </location>
</feature>
<feature type="transmembrane region" description="Helical" evidence="3">
    <location>
        <begin position="4"/>
        <end position="23"/>
    </location>
</feature>
<feature type="region of interest" description="Required for DVL/RTFL small polypeptide activity" evidence="2">
    <location>
        <begin position="17"/>
        <end position="48"/>
    </location>
</feature>
<keyword id="KW-1003">Cell membrane</keyword>
<keyword id="KW-0217">Developmental protein</keyword>
<keyword id="KW-0472">Membrane</keyword>
<keyword id="KW-1185">Reference proteome</keyword>
<keyword id="KW-0812">Transmembrane</keyword>
<keyword id="KW-1133">Transmembrane helix</keyword>